<keyword id="KW-0143">Chaperone</keyword>
<keyword id="KW-0963">Cytoplasm</keyword>
<sequence length="88" mass="10550">MDIHNKARIHWACRRGMRELDISIMPFFEHEYDSLSDEEKRIFVRLLQSDDPDLFNWLMNHGKPADAELEQMVRLIQTRNRERGPVAI</sequence>
<protein>
    <recommendedName>
        <fullName>FAD assembly factor SdhE</fullName>
    </recommendedName>
</protein>
<name>SDHE_SALCH</name>
<organism>
    <name type="scientific">Salmonella choleraesuis (strain SC-B67)</name>
    <dbReference type="NCBI Taxonomy" id="321314"/>
    <lineage>
        <taxon>Bacteria</taxon>
        <taxon>Pseudomonadati</taxon>
        <taxon>Pseudomonadota</taxon>
        <taxon>Gammaproteobacteria</taxon>
        <taxon>Enterobacterales</taxon>
        <taxon>Enterobacteriaceae</taxon>
        <taxon>Salmonella</taxon>
    </lineage>
</organism>
<reference key="1">
    <citation type="journal article" date="2005" name="Nucleic Acids Res.">
        <title>The genome sequence of Salmonella enterica serovar Choleraesuis, a highly invasive and resistant zoonotic pathogen.</title>
        <authorList>
            <person name="Chiu C.-H."/>
            <person name="Tang P."/>
            <person name="Chu C."/>
            <person name="Hu S."/>
            <person name="Bao Q."/>
            <person name="Yu J."/>
            <person name="Chou Y.-Y."/>
            <person name="Wang H.-S."/>
            <person name="Lee Y.-S."/>
        </authorList>
    </citation>
    <scope>NUCLEOTIDE SEQUENCE [LARGE SCALE GENOMIC DNA]</scope>
    <source>
        <strain>SC-B67</strain>
    </source>
</reference>
<evidence type="ECO:0000250" key="1">
    <source>
        <dbReference type="UniProtKB" id="G4V4G2"/>
    </source>
</evidence>
<evidence type="ECO:0000250" key="2">
    <source>
        <dbReference type="UniProtKB" id="P64559"/>
    </source>
</evidence>
<evidence type="ECO:0000305" key="3"/>
<accession>Q57K69</accession>
<comment type="function">
    <text evidence="1">An FAD assembly protein, which accelerates covalent attachment of the cofactor into other proteins. Plays an essential role in the assembly of succinate dehydrogenase (SDH, respiratory complex II), an enzyme complex that is a component of both the tricarboxylic acid cycle and the electron transport chain, and which couples the oxidation of succinate to fumarate with the reduction of ubiquinone (coenzyme Q) to ubiquinol. Required for flavinylation (covalent attachment of FAD) of the flavoprotein subunit SdhA of SDH and other flavinylated proteins as well.</text>
</comment>
<comment type="subunit">
    <text evidence="2">Monomer.</text>
</comment>
<comment type="subcellular location">
    <subcellularLocation>
        <location evidence="1">Cytoplasm</location>
    </subcellularLocation>
</comment>
<comment type="similarity">
    <text evidence="3">Belongs to the SdhE FAD assembly factor family.</text>
</comment>
<gene>
    <name type="primary">sdhE</name>
    <name type="synonym">ygfY</name>
    <name type="ordered locus">SCH_2987</name>
</gene>
<dbReference type="EMBL" id="AE017220">
    <property type="protein sequence ID" value="AAX66893.1"/>
    <property type="molecule type" value="Genomic_DNA"/>
</dbReference>
<dbReference type="RefSeq" id="WP_000351186.1">
    <property type="nucleotide sequence ID" value="NC_006905.1"/>
</dbReference>
<dbReference type="SMR" id="Q57K69"/>
<dbReference type="GeneID" id="66757346"/>
<dbReference type="KEGG" id="sec:SCH_2987"/>
<dbReference type="HOGENOM" id="CLU_103054_2_2_6"/>
<dbReference type="Proteomes" id="UP000000538">
    <property type="component" value="Chromosome"/>
</dbReference>
<dbReference type="GO" id="GO:0005737">
    <property type="term" value="C:cytoplasm"/>
    <property type="evidence" value="ECO:0007669"/>
    <property type="project" value="UniProtKB-SubCell"/>
</dbReference>
<dbReference type="GO" id="GO:0006105">
    <property type="term" value="P:succinate metabolic process"/>
    <property type="evidence" value="ECO:0007669"/>
    <property type="project" value="TreeGrafter"/>
</dbReference>
<dbReference type="FunFam" id="1.10.150.250:FF:000001">
    <property type="entry name" value="FAD assembly factor SdhE"/>
    <property type="match status" value="1"/>
</dbReference>
<dbReference type="Gene3D" id="1.10.150.250">
    <property type="entry name" value="Flavinator of succinate dehydrogenase"/>
    <property type="match status" value="1"/>
</dbReference>
<dbReference type="InterPro" id="IPR005631">
    <property type="entry name" value="SDH"/>
</dbReference>
<dbReference type="InterPro" id="IPR036714">
    <property type="entry name" value="SDH_sf"/>
</dbReference>
<dbReference type="InterPro" id="IPR050531">
    <property type="entry name" value="SdhE_FAD_assembly_factor"/>
</dbReference>
<dbReference type="NCBIfam" id="NF008130">
    <property type="entry name" value="PRK10878.1"/>
    <property type="match status" value="1"/>
</dbReference>
<dbReference type="PANTHER" id="PTHR39585">
    <property type="entry name" value="FAD ASSEMBLY FACTOR SDHE"/>
    <property type="match status" value="1"/>
</dbReference>
<dbReference type="PANTHER" id="PTHR39585:SF1">
    <property type="entry name" value="FAD ASSEMBLY FACTOR SDHE"/>
    <property type="match status" value="1"/>
</dbReference>
<dbReference type="Pfam" id="PF03937">
    <property type="entry name" value="Sdh5"/>
    <property type="match status" value="1"/>
</dbReference>
<dbReference type="SUPFAM" id="SSF109910">
    <property type="entry name" value="YgfY-like"/>
    <property type="match status" value="1"/>
</dbReference>
<proteinExistence type="inferred from homology"/>
<feature type="chain" id="PRO_0000214419" description="FAD assembly factor SdhE">
    <location>
        <begin position="1"/>
        <end position="88"/>
    </location>
</feature>